<name>TDL1_ARATH</name>
<keyword id="KW-1185">Reference proteome</keyword>
<keyword id="KW-0732">Signal</keyword>
<accession>Q1G3T1</accession>
<gene>
    <name evidence="2" type="primary">TDL1</name>
    <name evidence="4" type="ordered locus">At1g32583</name>
</gene>
<feature type="signal peptide" evidence="1">
    <location>
        <begin position="1"/>
        <end position="30"/>
    </location>
</feature>
<feature type="chain" id="PRO_0000432094" description="TPD1 protein homolog 1" evidence="1">
    <location>
        <begin position="31"/>
        <end position="179"/>
    </location>
</feature>
<protein>
    <recommendedName>
        <fullName evidence="3">TPD1 protein homolog 1</fullName>
    </recommendedName>
    <alternativeName>
        <fullName evidence="2">TPD1-like protein 1</fullName>
        <shortName evidence="2">AtTDL1</shortName>
    </alternativeName>
</protein>
<evidence type="ECO:0000255" key="1"/>
<evidence type="ECO:0000303" key="2">
    <source>
    </source>
</evidence>
<evidence type="ECO:0000305" key="3"/>
<evidence type="ECO:0000312" key="4">
    <source>
        <dbReference type="Araport" id="AT1G32583"/>
    </source>
</evidence>
<sequence length="179" mass="19885">MRMEHIYKFQHWLFFIGLGVLLSLSLSVKANDFEGSNDRRSIALKARSFVSINENRTALSRKLLLSPDIGDGTNRIGQDCSKDDIVLFQGSTNPLPSGVPSYTVEIFNSCVSDCNIAEIHVSCGWFSSVRLVNPRVFRRLDYDDCLVNDGQPLGPGQSLSFQYANSFSYPLSVASVSCF</sequence>
<reference key="1">
    <citation type="journal article" date="2000" name="Nature">
        <title>Sequence and analysis of chromosome 1 of the plant Arabidopsis thaliana.</title>
        <authorList>
            <person name="Theologis A."/>
            <person name="Ecker J.R."/>
            <person name="Palm C.J."/>
            <person name="Federspiel N.A."/>
            <person name="Kaul S."/>
            <person name="White O."/>
            <person name="Alonso J."/>
            <person name="Altafi H."/>
            <person name="Araujo R."/>
            <person name="Bowman C.L."/>
            <person name="Brooks S.Y."/>
            <person name="Buehler E."/>
            <person name="Chan A."/>
            <person name="Chao Q."/>
            <person name="Chen H."/>
            <person name="Cheuk R.F."/>
            <person name="Chin C.W."/>
            <person name="Chung M.K."/>
            <person name="Conn L."/>
            <person name="Conway A.B."/>
            <person name="Conway A.R."/>
            <person name="Creasy T.H."/>
            <person name="Dewar K."/>
            <person name="Dunn P."/>
            <person name="Etgu P."/>
            <person name="Feldblyum T.V."/>
            <person name="Feng J.-D."/>
            <person name="Fong B."/>
            <person name="Fujii C.Y."/>
            <person name="Gill J.E."/>
            <person name="Goldsmith A.D."/>
            <person name="Haas B."/>
            <person name="Hansen N.F."/>
            <person name="Hughes B."/>
            <person name="Huizar L."/>
            <person name="Hunter J.L."/>
            <person name="Jenkins J."/>
            <person name="Johnson-Hopson C."/>
            <person name="Khan S."/>
            <person name="Khaykin E."/>
            <person name="Kim C.J."/>
            <person name="Koo H.L."/>
            <person name="Kremenetskaia I."/>
            <person name="Kurtz D.B."/>
            <person name="Kwan A."/>
            <person name="Lam B."/>
            <person name="Langin-Hooper S."/>
            <person name="Lee A."/>
            <person name="Lee J.M."/>
            <person name="Lenz C.A."/>
            <person name="Li J.H."/>
            <person name="Li Y.-P."/>
            <person name="Lin X."/>
            <person name="Liu S.X."/>
            <person name="Liu Z.A."/>
            <person name="Luros J.S."/>
            <person name="Maiti R."/>
            <person name="Marziali A."/>
            <person name="Militscher J."/>
            <person name="Miranda M."/>
            <person name="Nguyen M."/>
            <person name="Nierman W.C."/>
            <person name="Osborne B.I."/>
            <person name="Pai G."/>
            <person name="Peterson J."/>
            <person name="Pham P.K."/>
            <person name="Rizzo M."/>
            <person name="Rooney T."/>
            <person name="Rowley D."/>
            <person name="Sakano H."/>
            <person name="Salzberg S.L."/>
            <person name="Schwartz J.R."/>
            <person name="Shinn P."/>
            <person name="Southwick A.M."/>
            <person name="Sun H."/>
            <person name="Tallon L.J."/>
            <person name="Tambunga G."/>
            <person name="Toriumi M.J."/>
            <person name="Town C.D."/>
            <person name="Utterback T."/>
            <person name="Van Aken S."/>
            <person name="Vaysberg M."/>
            <person name="Vysotskaia V.S."/>
            <person name="Walker M."/>
            <person name="Wu D."/>
            <person name="Yu G."/>
            <person name="Fraser C.M."/>
            <person name="Venter J.C."/>
            <person name="Davis R.W."/>
        </authorList>
    </citation>
    <scope>NUCLEOTIDE SEQUENCE [LARGE SCALE GENOMIC DNA]</scope>
    <source>
        <strain>cv. Columbia</strain>
    </source>
</reference>
<reference key="2">
    <citation type="journal article" date="2017" name="Plant J.">
        <title>Araport11: a complete reannotation of the Arabidopsis thaliana reference genome.</title>
        <authorList>
            <person name="Cheng C.Y."/>
            <person name="Krishnakumar V."/>
            <person name="Chan A.P."/>
            <person name="Thibaud-Nissen F."/>
            <person name="Schobel S."/>
            <person name="Town C.D."/>
        </authorList>
    </citation>
    <scope>GENOME REANNOTATION</scope>
    <source>
        <strain>cv. Columbia</strain>
    </source>
</reference>
<reference key="3">
    <citation type="journal article" date="2006" name="Plant Biotechnol. J.">
        <title>Simultaneous high-throughput recombinational cloning of open reading frames in closed and open configurations.</title>
        <authorList>
            <person name="Underwood B.A."/>
            <person name="Vanderhaeghen R."/>
            <person name="Whitford R."/>
            <person name="Town C.D."/>
            <person name="Hilson P."/>
        </authorList>
    </citation>
    <scope>NUCLEOTIDE SEQUENCE [LARGE SCALE MRNA]</scope>
    <source>
        <strain>cv. Columbia</strain>
    </source>
</reference>
<reference key="4">
    <citation type="journal article" date="2008" name="Plant J.">
        <title>OsTDL1A binds to the LRR domain of rice receptor kinase MSP1, and is required to limit sporocyte numbers.</title>
        <authorList>
            <person name="Zhao X."/>
            <person name="de Palma J."/>
            <person name="Oane R."/>
            <person name="Gamuyao R."/>
            <person name="Luo M."/>
            <person name="Chaudhury A."/>
            <person name="Herve P."/>
            <person name="Xue Q."/>
            <person name="Bennett J."/>
        </authorList>
    </citation>
    <scope>GENE FAMILY</scope>
</reference>
<proteinExistence type="evidence at transcript level"/>
<dbReference type="EMBL" id="AC055769">
    <property type="status" value="NOT_ANNOTATED_CDS"/>
    <property type="molecule type" value="Genomic_DNA"/>
</dbReference>
<dbReference type="EMBL" id="CP002684">
    <property type="protein sequence ID" value="AEE31507.1"/>
    <property type="molecule type" value="Genomic_DNA"/>
</dbReference>
<dbReference type="EMBL" id="CP002684">
    <property type="protein sequence ID" value="ANM60616.1"/>
    <property type="molecule type" value="Genomic_DNA"/>
</dbReference>
<dbReference type="EMBL" id="DQ487503">
    <property type="protein sequence ID" value="ABF59206.1"/>
    <property type="molecule type" value="mRNA"/>
</dbReference>
<dbReference type="RefSeq" id="NP_001031128.1">
    <property type="nucleotide sequence ID" value="NM_001036051.4"/>
</dbReference>
<dbReference type="RefSeq" id="NP_001322889.1">
    <property type="nucleotide sequence ID" value="NM_001333013.1"/>
</dbReference>
<dbReference type="SMR" id="Q1G3T1"/>
<dbReference type="FunCoup" id="Q1G3T1">
    <property type="interactions" value="2"/>
</dbReference>
<dbReference type="STRING" id="3702.Q1G3T1"/>
<dbReference type="PaxDb" id="3702-AT1G32583.1"/>
<dbReference type="EnsemblPlants" id="AT1G32583.1">
    <property type="protein sequence ID" value="AT1G32583.1"/>
    <property type="gene ID" value="AT1G32583"/>
</dbReference>
<dbReference type="EnsemblPlants" id="AT1G32583.2">
    <property type="protein sequence ID" value="AT1G32583.2"/>
    <property type="gene ID" value="AT1G32583"/>
</dbReference>
<dbReference type="GeneID" id="3766880"/>
<dbReference type="Gramene" id="AT1G32583.1">
    <property type="protein sequence ID" value="AT1G32583.1"/>
    <property type="gene ID" value="AT1G32583"/>
</dbReference>
<dbReference type="Gramene" id="AT1G32583.2">
    <property type="protein sequence ID" value="AT1G32583.2"/>
    <property type="gene ID" value="AT1G32583"/>
</dbReference>
<dbReference type="KEGG" id="ath:AT1G32583"/>
<dbReference type="Araport" id="AT1G32583"/>
<dbReference type="TAIR" id="AT1G32583"/>
<dbReference type="eggNOG" id="ENOG502S138">
    <property type="taxonomic scope" value="Eukaryota"/>
</dbReference>
<dbReference type="HOGENOM" id="CLU_102808_0_0_1"/>
<dbReference type="InParanoid" id="Q1G3T1"/>
<dbReference type="OMA" id="GECLSFE"/>
<dbReference type="OrthoDB" id="1572689at2759"/>
<dbReference type="PhylomeDB" id="Q1G3T1"/>
<dbReference type="PRO" id="PR:Q1G3T1"/>
<dbReference type="Proteomes" id="UP000006548">
    <property type="component" value="Chromosome 1"/>
</dbReference>
<dbReference type="ExpressionAtlas" id="Q1G3T1">
    <property type="expression patterns" value="baseline and differential"/>
</dbReference>
<dbReference type="GO" id="GO:0009408">
    <property type="term" value="P:response to heat"/>
    <property type="evidence" value="ECO:0000270"/>
    <property type="project" value="TAIR"/>
</dbReference>
<dbReference type="InterPro" id="IPR040361">
    <property type="entry name" value="TPD1"/>
</dbReference>
<dbReference type="PANTHER" id="PTHR33184">
    <property type="entry name" value="PROTEIN TAPETUM DETERMINANT 1-LIKE-RELATED"/>
    <property type="match status" value="1"/>
</dbReference>
<dbReference type="PANTHER" id="PTHR33184:SF61">
    <property type="entry name" value="TPD1 PROTEIN HOMOLOG 1"/>
    <property type="match status" value="1"/>
</dbReference>
<dbReference type="Pfam" id="PF24068">
    <property type="entry name" value="TPD1_C"/>
    <property type="match status" value="1"/>
</dbReference>
<organism>
    <name type="scientific">Arabidopsis thaliana</name>
    <name type="common">Mouse-ear cress</name>
    <dbReference type="NCBI Taxonomy" id="3702"/>
    <lineage>
        <taxon>Eukaryota</taxon>
        <taxon>Viridiplantae</taxon>
        <taxon>Streptophyta</taxon>
        <taxon>Embryophyta</taxon>
        <taxon>Tracheophyta</taxon>
        <taxon>Spermatophyta</taxon>
        <taxon>Magnoliopsida</taxon>
        <taxon>eudicotyledons</taxon>
        <taxon>Gunneridae</taxon>
        <taxon>Pentapetalae</taxon>
        <taxon>rosids</taxon>
        <taxon>malvids</taxon>
        <taxon>Brassicales</taxon>
        <taxon>Brassicaceae</taxon>
        <taxon>Camelineae</taxon>
        <taxon>Arabidopsis</taxon>
    </lineage>
</organism>